<name>CDLS_PHOLL</name>
<keyword id="KW-1185">Reference proteome</keyword>
<keyword id="KW-0808">Transferase</keyword>
<dbReference type="EC" id="2.3.2.22"/>
<dbReference type="EMBL" id="BX571859">
    <property type="protein sequence ID" value="CAE12592.1"/>
    <property type="molecule type" value="Genomic_DNA"/>
</dbReference>
<dbReference type="RefSeq" id="WP_011144694.1">
    <property type="nucleotide sequence ID" value="NC_005126.1"/>
</dbReference>
<dbReference type="SMR" id="Q7N9M5"/>
<dbReference type="STRING" id="243265.plu0297"/>
<dbReference type="GeneID" id="48846589"/>
<dbReference type="KEGG" id="plu:plu0297"/>
<dbReference type="eggNOG" id="ENOG50332PQ">
    <property type="taxonomic scope" value="Bacteria"/>
</dbReference>
<dbReference type="HOGENOM" id="CLU_084186_1_0_6"/>
<dbReference type="OrthoDB" id="2895472at2"/>
<dbReference type="Proteomes" id="UP000002514">
    <property type="component" value="Chromosome"/>
</dbReference>
<dbReference type="GO" id="GO:0016755">
    <property type="term" value="F:aminoacyltransferase activity"/>
    <property type="evidence" value="ECO:0000314"/>
    <property type="project" value="UniProtKB"/>
</dbReference>
<dbReference type="Gene3D" id="3.40.50.11710">
    <property type="entry name" value="Cyclodipeptide synthase"/>
    <property type="match status" value="1"/>
</dbReference>
<dbReference type="InterPro" id="IPR030903">
    <property type="entry name" value="CDPS"/>
</dbReference>
<dbReference type="InterPro" id="IPR038622">
    <property type="entry name" value="CDPS_sf"/>
</dbReference>
<dbReference type="NCBIfam" id="TIGR04539">
    <property type="entry name" value="tRNA_cyclodipep"/>
    <property type="match status" value="1"/>
</dbReference>
<dbReference type="Pfam" id="PF16715">
    <property type="entry name" value="CDPS"/>
    <property type="match status" value="1"/>
</dbReference>
<organism>
    <name type="scientific">Photorhabdus laumondii subsp. laumondii (strain DSM 15139 / CIP 105565 / TT01)</name>
    <name type="common">Photorhabdus luminescens subsp. laumondii</name>
    <dbReference type="NCBI Taxonomy" id="243265"/>
    <lineage>
        <taxon>Bacteria</taxon>
        <taxon>Pseudomonadati</taxon>
        <taxon>Pseudomonadota</taxon>
        <taxon>Gammaproteobacteria</taxon>
        <taxon>Enterobacterales</taxon>
        <taxon>Morganellaceae</taxon>
        <taxon>Photorhabdus</taxon>
    </lineage>
</organism>
<reference key="1">
    <citation type="journal article" date="2003" name="Nat. Biotechnol.">
        <title>The genome sequence of the entomopathogenic bacterium Photorhabdus luminescens.</title>
        <authorList>
            <person name="Duchaud E."/>
            <person name="Rusniok C."/>
            <person name="Frangeul L."/>
            <person name="Buchrieser C."/>
            <person name="Givaudan A."/>
            <person name="Taourit S."/>
            <person name="Bocs S."/>
            <person name="Boursaux-Eude C."/>
            <person name="Chandler M."/>
            <person name="Charles J.-F."/>
            <person name="Dassa E."/>
            <person name="Derose R."/>
            <person name="Derzelle S."/>
            <person name="Freyssinet G."/>
            <person name="Gaudriault S."/>
            <person name="Medigue C."/>
            <person name="Lanois A."/>
            <person name="Powell K."/>
            <person name="Siguier P."/>
            <person name="Vincent R."/>
            <person name="Wingate V."/>
            <person name="Zouine M."/>
            <person name="Glaser P."/>
            <person name="Boemare N."/>
            <person name="Danchin A."/>
            <person name="Kunst F."/>
        </authorList>
    </citation>
    <scope>NUCLEOTIDE SEQUENCE [LARGE SCALE GENOMIC DNA]</scope>
    <source>
        <strain>DSM 15139 / CIP 105565 / TT01</strain>
    </source>
</reference>
<reference key="2">
    <citation type="journal article" date="2009" name="Nat. Chem. Biol.">
        <title>Cyclodipeptide synthases arec a family of tRNA-dependent peptide bond-forming enzymes.</title>
        <authorList>
            <person name="Gondry M."/>
            <person name="Sauguet L."/>
            <person name="Belin P."/>
            <person name="Thai R."/>
            <person name="Amouroux R."/>
            <person name="Tellier C."/>
            <person name="Tuphile K."/>
            <person name="Jacquet M."/>
            <person name="Braud S."/>
            <person name="Courcon M."/>
            <person name="Masson C."/>
            <person name="Dubois S."/>
            <person name="Lautru S."/>
            <person name="Lecoq A."/>
            <person name="Hashimoto S."/>
            <person name="Genet R."/>
            <person name="Pernodet J.L."/>
        </authorList>
    </citation>
    <scope>FUNCTION</scope>
    <scope>CATALYTIC ACTIVITY</scope>
    <scope>SUBSTRATE SPECIFICITY</scope>
</reference>
<sequence>MLHENSPSFTVQGETSRCDQIIQKGDHALIGISPFNSRFSKDYVVDLIQWSSHYFRQVDILLPCEREASRLLVASGIDNVKAIKKTHREIRRHLRNLDYVISTATLKSKQIRVIQFSDFSLNHDYQSLKTQVENAFNESESFKKSCLDMSFQAIKGRLKGTGQYFGQIDLQLVYKALPYIFAEIPFYLNTPRLLGVKYSTLLYHRPWSIGKGLFNGSYPIQVADKQSYGIVTQL</sequence>
<comment type="function">
    <text evidence="2">It uses activated amino acids in the form of aminoacyl-tRNAs (aa-tRNAs) as substrates to catalyze the ATP-independent formation of cyclodipeptides which are intermediates in diketopiperazine (DKP) biosynthetic pathways. Catalyzes the formation of cyclo(L-Leu-L-Leu) (cLL) from L-leucyl-tRNA(Leu). Can incorporate various nonpolar residues, such as L-phenylalanine, L-leucine and L-methionine, into cyclodipeptides.</text>
</comment>
<comment type="catalytic activity">
    <reaction evidence="2">
        <text>2 L-leucyl-tRNA(Leu) = cyclo(L-leucyl-L-leucyl) + 2 tRNA(Leu) + 2 H(+)</text>
        <dbReference type="Rhea" id="RHEA:46452"/>
        <dbReference type="Rhea" id="RHEA-COMP:9613"/>
        <dbReference type="Rhea" id="RHEA-COMP:9622"/>
        <dbReference type="ChEBI" id="CHEBI:15378"/>
        <dbReference type="ChEBI" id="CHEBI:67269"/>
        <dbReference type="ChEBI" id="CHEBI:78442"/>
        <dbReference type="ChEBI" id="CHEBI:78494"/>
        <dbReference type="EC" id="2.3.2.22"/>
    </reaction>
</comment>
<comment type="similarity">
    <text evidence="3">Belongs to the CDPS family.</text>
</comment>
<gene>
    <name type="ordered locus">plu0297</name>
</gene>
<accession>Q7N9M5</accession>
<feature type="chain" id="PRO_0000423353" description="Cyclo(L-leucyl-L-leucyl) synthase">
    <location>
        <begin position="1"/>
        <end position="234"/>
    </location>
</feature>
<feature type="active site" description="Nucleophile" evidence="1">
    <location>
        <position position="33"/>
    </location>
</feature>
<feature type="binding site" evidence="1">
    <location>
        <position position="36"/>
    </location>
    <ligand>
        <name>substrate</name>
    </ligand>
</feature>
<feature type="binding site" evidence="1">
    <location>
        <begin position="179"/>
        <end position="183"/>
    </location>
    <ligand>
        <name>substrate</name>
    </ligand>
</feature>
<feature type="binding site" evidence="1">
    <location>
        <position position="203"/>
    </location>
    <ligand>
        <name>substrate</name>
    </ligand>
</feature>
<feature type="binding site" evidence="1">
    <location>
        <begin position="208"/>
        <end position="209"/>
    </location>
    <ligand>
        <name>substrate</name>
    </ligand>
</feature>
<feature type="site" description="Could have a critical role in the catalytic mechanism" evidence="1">
    <location>
        <position position="36"/>
    </location>
</feature>
<feature type="site" description="Could be involved in aa-tRNA binding" evidence="1">
    <location>
        <position position="85"/>
    </location>
</feature>
<feature type="site" description="Could be involved in aa-tRNA binding" evidence="1">
    <location>
        <position position="95"/>
    </location>
</feature>
<feature type="site" description="Could be involved in aa-tRNA binding" evidence="1">
    <location>
        <position position="179"/>
    </location>
</feature>
<feature type="site" description="Could have a critical role in the catalytic mechanism" evidence="1">
    <location>
        <position position="183"/>
    </location>
</feature>
<proteinExistence type="evidence at protein level"/>
<evidence type="ECO:0000250" key="1"/>
<evidence type="ECO:0000269" key="2">
    <source>
    </source>
</evidence>
<evidence type="ECO:0000305" key="3"/>
<protein>
    <recommendedName>
        <fullName>Cyclo(L-leucyl-L-leucyl) synthase</fullName>
        <ecNumber>2.3.2.22</ecNumber>
    </recommendedName>
    <alternativeName>
        <fullName>Cyclodileucine synthase</fullName>
    </alternativeName>
    <alternativeName>
        <fullName>Cyclodipeptide synthase</fullName>
        <shortName>CDPS</shortName>
    </alternativeName>
</protein>